<protein>
    <recommendedName>
        <fullName>Myosin regulatory light chain 2A, cardiac muscle isoform</fullName>
        <shortName>G2</shortName>
        <shortName>MLC-2A</shortName>
    </recommendedName>
</protein>
<name>MLRA_CHICK</name>
<organism>
    <name type="scientific">Gallus gallus</name>
    <name type="common">Chicken</name>
    <dbReference type="NCBI Taxonomy" id="9031"/>
    <lineage>
        <taxon>Eukaryota</taxon>
        <taxon>Metazoa</taxon>
        <taxon>Chordata</taxon>
        <taxon>Craniata</taxon>
        <taxon>Vertebrata</taxon>
        <taxon>Euteleostomi</taxon>
        <taxon>Archelosauria</taxon>
        <taxon>Archosauria</taxon>
        <taxon>Dinosauria</taxon>
        <taxon>Saurischia</taxon>
        <taxon>Theropoda</taxon>
        <taxon>Coelurosauria</taxon>
        <taxon>Aves</taxon>
        <taxon>Neognathae</taxon>
        <taxon>Galloanserae</taxon>
        <taxon>Galliformes</taxon>
        <taxon>Phasianidae</taxon>
        <taxon>Phasianinae</taxon>
        <taxon>Gallus</taxon>
    </lineage>
</organism>
<keyword id="KW-0106">Calcium</keyword>
<keyword id="KW-0903">Direct protein sequencing</keyword>
<keyword id="KW-0479">Metal-binding</keyword>
<keyword id="KW-0488">Methylation</keyword>
<keyword id="KW-0505">Motor protein</keyword>
<keyword id="KW-0514">Muscle protein</keyword>
<keyword id="KW-0518">Myosin</keyword>
<keyword id="KW-1185">Reference proteome</keyword>
<keyword id="KW-0677">Repeat</keyword>
<dbReference type="EMBL" id="M10990">
    <property type="protein sequence ID" value="AAA48975.1"/>
    <property type="molecule type" value="Genomic_DNA"/>
</dbReference>
<dbReference type="PIR" id="C03044">
    <property type="entry name" value="MOCHAC"/>
</dbReference>
<dbReference type="SMR" id="P02610"/>
<dbReference type="FunCoup" id="P02610">
    <property type="interactions" value="802"/>
</dbReference>
<dbReference type="STRING" id="9031.ENSGALP00000034439"/>
<dbReference type="PaxDb" id="9031-ENSGALP00000034439"/>
<dbReference type="VEuPathDB" id="HostDB:geneid_416874"/>
<dbReference type="eggNOG" id="KOG0031">
    <property type="taxonomic scope" value="Eukaryota"/>
</dbReference>
<dbReference type="InParanoid" id="P02610"/>
<dbReference type="PhylomeDB" id="P02610"/>
<dbReference type="Proteomes" id="UP000000539">
    <property type="component" value="Unassembled WGS sequence"/>
</dbReference>
<dbReference type="GO" id="GO:0005737">
    <property type="term" value="C:cytoplasm"/>
    <property type="evidence" value="ECO:0000318"/>
    <property type="project" value="GO_Central"/>
</dbReference>
<dbReference type="GO" id="GO:0030016">
    <property type="term" value="C:myofibril"/>
    <property type="evidence" value="ECO:0000318"/>
    <property type="project" value="GO_Central"/>
</dbReference>
<dbReference type="GO" id="GO:0016459">
    <property type="term" value="C:myosin complex"/>
    <property type="evidence" value="ECO:0007669"/>
    <property type="project" value="UniProtKB-KW"/>
</dbReference>
<dbReference type="GO" id="GO:0005509">
    <property type="term" value="F:calcium ion binding"/>
    <property type="evidence" value="ECO:0000318"/>
    <property type="project" value="GO_Central"/>
</dbReference>
<dbReference type="GO" id="GO:0060048">
    <property type="term" value="P:cardiac muscle contraction"/>
    <property type="evidence" value="ECO:0000318"/>
    <property type="project" value="GO_Central"/>
</dbReference>
<dbReference type="GO" id="GO:0007507">
    <property type="term" value="P:heart development"/>
    <property type="evidence" value="ECO:0000318"/>
    <property type="project" value="GO_Central"/>
</dbReference>
<dbReference type="GO" id="GO:0042694">
    <property type="term" value="P:muscle cell fate specification"/>
    <property type="evidence" value="ECO:0000318"/>
    <property type="project" value="GO_Central"/>
</dbReference>
<dbReference type="CDD" id="cd00051">
    <property type="entry name" value="EFh"/>
    <property type="match status" value="1"/>
</dbReference>
<dbReference type="FunFam" id="1.10.238.10:FF:000010">
    <property type="entry name" value="Myosin regulatory light chain 2, atrial isoform"/>
    <property type="match status" value="1"/>
</dbReference>
<dbReference type="FunFam" id="1.10.238.10:FF:000007">
    <property type="entry name" value="Putative myosin regulatory light chain sqh"/>
    <property type="match status" value="1"/>
</dbReference>
<dbReference type="Gene3D" id="1.10.238.10">
    <property type="entry name" value="EF-hand"/>
    <property type="match status" value="2"/>
</dbReference>
<dbReference type="InterPro" id="IPR011992">
    <property type="entry name" value="EF-hand-dom_pair"/>
</dbReference>
<dbReference type="InterPro" id="IPR018247">
    <property type="entry name" value="EF_Hand_1_Ca_BS"/>
</dbReference>
<dbReference type="InterPro" id="IPR002048">
    <property type="entry name" value="EF_hand_dom"/>
</dbReference>
<dbReference type="InterPro" id="IPR050403">
    <property type="entry name" value="Myosin_RLC"/>
</dbReference>
<dbReference type="PANTHER" id="PTHR23049">
    <property type="entry name" value="MYOSIN REGULATORY LIGHT CHAIN 2"/>
    <property type="match status" value="1"/>
</dbReference>
<dbReference type="Pfam" id="PF13499">
    <property type="entry name" value="EF-hand_7"/>
    <property type="match status" value="1"/>
</dbReference>
<dbReference type="SMART" id="SM00054">
    <property type="entry name" value="EFh"/>
    <property type="match status" value="2"/>
</dbReference>
<dbReference type="SUPFAM" id="SSF47473">
    <property type="entry name" value="EF-hand"/>
    <property type="match status" value="1"/>
</dbReference>
<dbReference type="PROSITE" id="PS00018">
    <property type="entry name" value="EF_HAND_1"/>
    <property type="match status" value="1"/>
</dbReference>
<dbReference type="PROSITE" id="PS50222">
    <property type="entry name" value="EF_HAND_2"/>
    <property type="match status" value="3"/>
</dbReference>
<proteinExistence type="evidence at protein level"/>
<evidence type="ECO:0000250" key="1">
    <source>
        <dbReference type="UniProtKB" id="P02608"/>
    </source>
</evidence>
<evidence type="ECO:0000255" key="2">
    <source>
        <dbReference type="PROSITE-ProRule" id="PRU00448"/>
    </source>
</evidence>
<accession>P02610</accession>
<feature type="initiator methionine" description="Removed">
    <location>
        <position position="1"/>
    </location>
</feature>
<feature type="chain" id="PRO_0000019306" description="Myosin regulatory light chain 2A, cardiac muscle isoform">
    <location>
        <begin position="2"/>
        <end position="165"/>
    </location>
</feature>
<feature type="domain" description="EF-hand 1" evidence="2">
    <location>
        <begin position="24"/>
        <end position="59"/>
    </location>
</feature>
<feature type="domain" description="EF-hand 2" evidence="2">
    <location>
        <begin position="94"/>
        <end position="128"/>
    </location>
</feature>
<feature type="domain" description="EF-hand 3" evidence="2">
    <location>
        <begin position="129"/>
        <end position="164"/>
    </location>
</feature>
<feature type="binding site" evidence="2">
    <location>
        <position position="37"/>
    </location>
    <ligand>
        <name>Ca(2+)</name>
        <dbReference type="ChEBI" id="CHEBI:29108"/>
    </ligand>
</feature>
<feature type="binding site" evidence="2">
    <location>
        <position position="39"/>
    </location>
    <ligand>
        <name>Ca(2+)</name>
        <dbReference type="ChEBI" id="CHEBI:29108"/>
    </ligand>
</feature>
<feature type="binding site" evidence="2">
    <location>
        <position position="41"/>
    </location>
    <ligand>
        <name>Ca(2+)</name>
        <dbReference type="ChEBI" id="CHEBI:29108"/>
    </ligand>
</feature>
<feature type="binding site" evidence="2">
    <location>
        <position position="48"/>
    </location>
    <ligand>
        <name>Ca(2+)</name>
        <dbReference type="ChEBI" id="CHEBI:29108"/>
    </ligand>
</feature>
<feature type="modified residue" description="N,N,N-trimethylalanine" evidence="1">
    <location>
        <position position="2"/>
    </location>
</feature>
<sequence>MAPKKAKKRIEGANSNVFSMFEQAQIQEFKEAFTIMDQNRDGFIDKADLRDTFAALGRLNVKNEEIDEMIKEAPGPINFTVFLTMFGEKLKGADPEETILNAFKVFDPEGKGLKSAYIKEMLMTQEGRFSQEEIDQMFAAFPPDVSGNLDYKNLVHVITHGEEKD</sequence>
<reference key="1">
    <citation type="journal article" date="1985" name="J. Biol. Chem.">
        <title>Isolation and characterization of the chicken cardiac myosin light chain (L-2A) gene. Evidence for two additional N-terminal amino acids.</title>
        <authorList>
            <person name="Winter B."/>
            <person name="Klapthor H."/>
            <person name="Wiebauer K."/>
            <person name="Delius H."/>
            <person name="Arnold H.H."/>
        </authorList>
    </citation>
    <scope>NUCLEOTIDE SEQUENCE [GENOMIC DNA]</scope>
</reference>
<reference key="2">
    <citation type="journal article" date="1981" name="FEBS Lett.">
        <title>Amino acid sequences of the cardiac L-2A, L-2B and gizzard 17 000-Mr light chains of chicken muscle myosin.</title>
        <authorList>
            <person name="Matsuda G."/>
            <person name="Maita T."/>
            <person name="Kato Y."/>
            <person name="Chen J."/>
            <person name="Umegane T."/>
        </authorList>
    </citation>
    <scope>PROTEIN SEQUENCE OF 3-165</scope>
</reference>
<comment type="subunit">
    <text>Myosin is a hexamer of 2 heavy chains and 4 light chains.</text>
</comment>
<comment type="PTM">
    <text>The N-terminus is blocked. N,N,N-trimethylalanine, found in other myosin light chains would not have been detected in the N-terminal tryptic peptide in PubMed:7319048 because it would remain trimethylated and ninhydrin negative after hydrolysis.</text>
</comment>
<comment type="miscellaneous">
    <text>This chain binds calcium.</text>
</comment>